<sequence length="164" mass="17777">MNIVDQQTFRDAMSCMGAAVNIITTDGPAGRAGFTASAVCSVTDTPPTLLVCLNRGASVWPVFNENRTLCVNTLSAGQEPLSNLFGGKTPMEHRFAAARWQTGVTGCPQLEEALVSFDCRISQVVSVGTHDILFCAIEAIHRHTTPYGLVWFDRSYHALMRPAC</sequence>
<keyword id="KW-0285">Flavoprotein</keyword>
<keyword id="KW-0288">FMN</keyword>
<keyword id="KW-0520">NAD</keyword>
<keyword id="KW-0560">Oxidoreductase</keyword>
<keyword id="KW-1185">Reference proteome</keyword>
<gene>
    <name evidence="1" type="primary">rutF</name>
    <name type="ordered locus">EC55989_1118</name>
</gene>
<name>RUTF_ECO55</name>
<dbReference type="EC" id="1.5.1.42" evidence="1"/>
<dbReference type="EMBL" id="CU928145">
    <property type="protein sequence ID" value="CAU96979.1"/>
    <property type="molecule type" value="Genomic_DNA"/>
</dbReference>
<dbReference type="RefSeq" id="WP_001028096.1">
    <property type="nucleotide sequence ID" value="NC_011748.1"/>
</dbReference>
<dbReference type="SMR" id="B7LFB7"/>
<dbReference type="KEGG" id="eck:EC55989_1118"/>
<dbReference type="HOGENOM" id="CLU_059021_2_2_6"/>
<dbReference type="Proteomes" id="UP000000746">
    <property type="component" value="Chromosome"/>
</dbReference>
<dbReference type="GO" id="GO:0010181">
    <property type="term" value="F:FMN binding"/>
    <property type="evidence" value="ECO:0007669"/>
    <property type="project" value="InterPro"/>
</dbReference>
<dbReference type="GO" id="GO:0052874">
    <property type="term" value="F:FMN reductase (NADH) activity"/>
    <property type="evidence" value="ECO:0007669"/>
    <property type="project" value="UniProtKB-EC"/>
</dbReference>
<dbReference type="GO" id="GO:0008752">
    <property type="term" value="F:FMN reductase [NAD(P)H] activity"/>
    <property type="evidence" value="ECO:0007669"/>
    <property type="project" value="InterPro"/>
</dbReference>
<dbReference type="GO" id="GO:0042602">
    <property type="term" value="F:riboflavin reductase (NADPH) activity"/>
    <property type="evidence" value="ECO:0007669"/>
    <property type="project" value="UniProtKB-UniRule"/>
</dbReference>
<dbReference type="GO" id="GO:0019740">
    <property type="term" value="P:nitrogen utilization"/>
    <property type="evidence" value="ECO:0007669"/>
    <property type="project" value="UniProtKB-UniRule"/>
</dbReference>
<dbReference type="GO" id="GO:0006212">
    <property type="term" value="P:uracil catabolic process"/>
    <property type="evidence" value="ECO:0007669"/>
    <property type="project" value="UniProtKB-UniRule"/>
</dbReference>
<dbReference type="FunFam" id="2.30.110.10:FF:000002">
    <property type="entry name" value="FMN reductase (NADH) RutF"/>
    <property type="match status" value="1"/>
</dbReference>
<dbReference type="Gene3D" id="2.30.110.10">
    <property type="entry name" value="Electron Transport, Fmn-binding Protein, Chain A"/>
    <property type="match status" value="1"/>
</dbReference>
<dbReference type="HAMAP" id="MF_00833">
    <property type="entry name" value="RutF"/>
    <property type="match status" value="1"/>
</dbReference>
<dbReference type="InterPro" id="IPR002563">
    <property type="entry name" value="Flavin_Rdtase-like_dom"/>
</dbReference>
<dbReference type="InterPro" id="IPR050268">
    <property type="entry name" value="NADH-dep_flavin_reductase"/>
</dbReference>
<dbReference type="InterPro" id="IPR019917">
    <property type="entry name" value="RutF"/>
</dbReference>
<dbReference type="InterPro" id="IPR012349">
    <property type="entry name" value="Split_barrel_FMN-bd"/>
</dbReference>
<dbReference type="NCBIfam" id="TIGR03615">
    <property type="entry name" value="RutF"/>
    <property type="match status" value="1"/>
</dbReference>
<dbReference type="PANTHER" id="PTHR30466">
    <property type="entry name" value="FLAVIN REDUCTASE"/>
    <property type="match status" value="1"/>
</dbReference>
<dbReference type="PANTHER" id="PTHR30466:SF1">
    <property type="entry name" value="FMN REDUCTASE (NADH) RUTF"/>
    <property type="match status" value="1"/>
</dbReference>
<dbReference type="Pfam" id="PF01613">
    <property type="entry name" value="Flavin_Reduct"/>
    <property type="match status" value="1"/>
</dbReference>
<dbReference type="SMART" id="SM00903">
    <property type="entry name" value="Flavin_Reduct"/>
    <property type="match status" value="1"/>
</dbReference>
<dbReference type="SUPFAM" id="SSF50475">
    <property type="entry name" value="FMN-binding split barrel"/>
    <property type="match status" value="1"/>
</dbReference>
<proteinExistence type="inferred from homology"/>
<reference key="1">
    <citation type="journal article" date="2009" name="PLoS Genet.">
        <title>Organised genome dynamics in the Escherichia coli species results in highly diverse adaptive paths.</title>
        <authorList>
            <person name="Touchon M."/>
            <person name="Hoede C."/>
            <person name="Tenaillon O."/>
            <person name="Barbe V."/>
            <person name="Baeriswyl S."/>
            <person name="Bidet P."/>
            <person name="Bingen E."/>
            <person name="Bonacorsi S."/>
            <person name="Bouchier C."/>
            <person name="Bouvet O."/>
            <person name="Calteau A."/>
            <person name="Chiapello H."/>
            <person name="Clermont O."/>
            <person name="Cruveiller S."/>
            <person name="Danchin A."/>
            <person name="Diard M."/>
            <person name="Dossat C."/>
            <person name="Karoui M.E."/>
            <person name="Frapy E."/>
            <person name="Garry L."/>
            <person name="Ghigo J.M."/>
            <person name="Gilles A.M."/>
            <person name="Johnson J."/>
            <person name="Le Bouguenec C."/>
            <person name="Lescat M."/>
            <person name="Mangenot S."/>
            <person name="Martinez-Jehanne V."/>
            <person name="Matic I."/>
            <person name="Nassif X."/>
            <person name="Oztas S."/>
            <person name="Petit M.A."/>
            <person name="Pichon C."/>
            <person name="Rouy Z."/>
            <person name="Ruf C.S."/>
            <person name="Schneider D."/>
            <person name="Tourret J."/>
            <person name="Vacherie B."/>
            <person name="Vallenet D."/>
            <person name="Medigue C."/>
            <person name="Rocha E.P.C."/>
            <person name="Denamur E."/>
        </authorList>
    </citation>
    <scope>NUCLEOTIDE SEQUENCE [LARGE SCALE GENOMIC DNA]</scope>
    <source>
        <strain>55989 / EAEC</strain>
    </source>
</reference>
<evidence type="ECO:0000255" key="1">
    <source>
        <dbReference type="HAMAP-Rule" id="MF_00833"/>
    </source>
</evidence>
<feature type="chain" id="PRO_0000402997" description="FMN reductase (NADH) RutF">
    <location>
        <begin position="1"/>
        <end position="164"/>
    </location>
</feature>
<organism>
    <name type="scientific">Escherichia coli (strain 55989 / EAEC)</name>
    <dbReference type="NCBI Taxonomy" id="585055"/>
    <lineage>
        <taxon>Bacteria</taxon>
        <taxon>Pseudomonadati</taxon>
        <taxon>Pseudomonadota</taxon>
        <taxon>Gammaproteobacteria</taxon>
        <taxon>Enterobacterales</taxon>
        <taxon>Enterobacteriaceae</taxon>
        <taxon>Escherichia</taxon>
    </lineage>
</organism>
<protein>
    <recommendedName>
        <fullName evidence="1">FMN reductase (NADH) RutF</fullName>
        <ecNumber evidence="1">1.5.1.42</ecNumber>
    </recommendedName>
    <alternativeName>
        <fullName evidence="1">FMN reductase</fullName>
    </alternativeName>
    <alternativeName>
        <fullName evidence="1">NADH-flavin reductase RutF</fullName>
    </alternativeName>
    <alternativeName>
        <fullName evidence="1">NADH:flavin oxidoreductase</fullName>
    </alternativeName>
</protein>
<comment type="function">
    <text evidence="1">Catalyzes the reduction of FMN to FMNH2 which is used to reduce pyrimidine by RutA via the Rut pathway.</text>
</comment>
<comment type="catalytic activity">
    <reaction evidence="1">
        <text>FMNH2 + NAD(+) = FMN + NADH + 2 H(+)</text>
        <dbReference type="Rhea" id="RHEA:21620"/>
        <dbReference type="ChEBI" id="CHEBI:15378"/>
        <dbReference type="ChEBI" id="CHEBI:57540"/>
        <dbReference type="ChEBI" id="CHEBI:57618"/>
        <dbReference type="ChEBI" id="CHEBI:57945"/>
        <dbReference type="ChEBI" id="CHEBI:58210"/>
        <dbReference type="EC" id="1.5.1.42"/>
    </reaction>
</comment>
<comment type="induction">
    <text evidence="1">Up-regulated by the nitrogen regulatory protein C (NtrC also called GlnG) and repressed by RutR.</text>
</comment>
<comment type="similarity">
    <text evidence="1">Belongs to the non-flavoprotein flavin reductase family. RutF subfamily.</text>
</comment>
<accession>B7LFB7</accession>